<organism>
    <name type="scientific">Cupriavidus taiwanensis (strain DSM 17343 / BCRC 17206 / CCUG 44338 / CIP 107171 / LMG 19424 / R1)</name>
    <name type="common">Ralstonia taiwanensis (strain LMG 19424)</name>
    <dbReference type="NCBI Taxonomy" id="977880"/>
    <lineage>
        <taxon>Bacteria</taxon>
        <taxon>Pseudomonadati</taxon>
        <taxon>Pseudomonadota</taxon>
        <taxon>Betaproteobacteria</taxon>
        <taxon>Burkholderiales</taxon>
        <taxon>Burkholderiaceae</taxon>
        <taxon>Cupriavidus</taxon>
    </lineage>
</organism>
<accession>B3R5Q8</accession>
<dbReference type="EC" id="1.4.3.5" evidence="1"/>
<dbReference type="EMBL" id="CU633749">
    <property type="protein sequence ID" value="CAQ70226.1"/>
    <property type="molecule type" value="Genomic_DNA"/>
</dbReference>
<dbReference type="RefSeq" id="WP_012353529.1">
    <property type="nucleotide sequence ID" value="NC_010528.1"/>
</dbReference>
<dbReference type="SMR" id="B3R5Q8"/>
<dbReference type="GeneID" id="29761561"/>
<dbReference type="KEGG" id="cti:RALTA_A2292"/>
<dbReference type="eggNOG" id="COG0259">
    <property type="taxonomic scope" value="Bacteria"/>
</dbReference>
<dbReference type="HOGENOM" id="CLU_032263_2_2_4"/>
<dbReference type="BioCyc" id="CTAI977880:RALTA_RS11120-MONOMER"/>
<dbReference type="UniPathway" id="UPA01068">
    <property type="reaction ID" value="UER00304"/>
</dbReference>
<dbReference type="UniPathway" id="UPA01068">
    <property type="reaction ID" value="UER00305"/>
</dbReference>
<dbReference type="Proteomes" id="UP000001692">
    <property type="component" value="Chromosome 1"/>
</dbReference>
<dbReference type="GO" id="GO:0010181">
    <property type="term" value="F:FMN binding"/>
    <property type="evidence" value="ECO:0007669"/>
    <property type="project" value="UniProtKB-UniRule"/>
</dbReference>
<dbReference type="GO" id="GO:0004733">
    <property type="term" value="F:pyridoxamine phosphate oxidase activity"/>
    <property type="evidence" value="ECO:0007669"/>
    <property type="project" value="UniProtKB-UniRule"/>
</dbReference>
<dbReference type="GO" id="GO:0008615">
    <property type="term" value="P:pyridoxine biosynthetic process"/>
    <property type="evidence" value="ECO:0007669"/>
    <property type="project" value="UniProtKB-KW"/>
</dbReference>
<dbReference type="FunFam" id="2.30.110.10:FF:000005">
    <property type="entry name" value="NAD(P)H-hydrate epimerase"/>
    <property type="match status" value="1"/>
</dbReference>
<dbReference type="Gene3D" id="2.30.110.10">
    <property type="entry name" value="Electron Transport, Fmn-binding Protein, Chain A"/>
    <property type="match status" value="1"/>
</dbReference>
<dbReference type="HAMAP" id="MF_01629">
    <property type="entry name" value="PdxH"/>
    <property type="match status" value="1"/>
</dbReference>
<dbReference type="InterPro" id="IPR000659">
    <property type="entry name" value="Pyridox_Oxase"/>
</dbReference>
<dbReference type="InterPro" id="IPR019740">
    <property type="entry name" value="Pyridox_Oxase_CS"/>
</dbReference>
<dbReference type="InterPro" id="IPR011576">
    <property type="entry name" value="Pyridox_Oxase_N"/>
</dbReference>
<dbReference type="InterPro" id="IPR019576">
    <property type="entry name" value="Pyridoxamine_oxidase_dimer_C"/>
</dbReference>
<dbReference type="InterPro" id="IPR012349">
    <property type="entry name" value="Split_barrel_FMN-bd"/>
</dbReference>
<dbReference type="NCBIfam" id="TIGR00558">
    <property type="entry name" value="pdxH"/>
    <property type="match status" value="1"/>
</dbReference>
<dbReference type="NCBIfam" id="NF004231">
    <property type="entry name" value="PRK05679.1"/>
    <property type="match status" value="1"/>
</dbReference>
<dbReference type="PANTHER" id="PTHR10851:SF0">
    <property type="entry name" value="PYRIDOXINE-5'-PHOSPHATE OXIDASE"/>
    <property type="match status" value="1"/>
</dbReference>
<dbReference type="PANTHER" id="PTHR10851">
    <property type="entry name" value="PYRIDOXINE-5-PHOSPHATE OXIDASE"/>
    <property type="match status" value="1"/>
</dbReference>
<dbReference type="Pfam" id="PF10590">
    <property type="entry name" value="PNP_phzG_C"/>
    <property type="match status" value="1"/>
</dbReference>
<dbReference type="Pfam" id="PF01243">
    <property type="entry name" value="PNPOx_N"/>
    <property type="match status" value="1"/>
</dbReference>
<dbReference type="PIRSF" id="PIRSF000190">
    <property type="entry name" value="Pyd_amn-ph_oxd"/>
    <property type="match status" value="1"/>
</dbReference>
<dbReference type="SUPFAM" id="SSF50475">
    <property type="entry name" value="FMN-binding split barrel"/>
    <property type="match status" value="1"/>
</dbReference>
<dbReference type="PROSITE" id="PS01064">
    <property type="entry name" value="PYRIDOX_OXIDASE"/>
    <property type="match status" value="1"/>
</dbReference>
<reference key="1">
    <citation type="journal article" date="2008" name="Genome Res.">
        <title>Genome sequence of the beta-rhizobium Cupriavidus taiwanensis and comparative genomics of rhizobia.</title>
        <authorList>
            <person name="Amadou C."/>
            <person name="Pascal G."/>
            <person name="Mangenot S."/>
            <person name="Glew M."/>
            <person name="Bontemps C."/>
            <person name="Capela D."/>
            <person name="Carrere S."/>
            <person name="Cruveiller S."/>
            <person name="Dossat C."/>
            <person name="Lajus A."/>
            <person name="Marchetti M."/>
            <person name="Poinsot V."/>
            <person name="Rouy Z."/>
            <person name="Servin B."/>
            <person name="Saad M."/>
            <person name="Schenowitz C."/>
            <person name="Barbe V."/>
            <person name="Batut J."/>
            <person name="Medigue C."/>
            <person name="Masson-Boivin C."/>
        </authorList>
    </citation>
    <scope>NUCLEOTIDE SEQUENCE [LARGE SCALE GENOMIC DNA]</scope>
    <source>
        <strain>DSM 17343 / BCRC 17206 / CCUG 44338 / CIP 107171 / LMG 19424 / R1</strain>
    </source>
</reference>
<protein>
    <recommendedName>
        <fullName evidence="1">Pyridoxine/pyridoxamine 5'-phosphate oxidase</fullName>
        <ecNumber evidence="1">1.4.3.5</ecNumber>
    </recommendedName>
    <alternativeName>
        <fullName evidence="1">PNP/PMP oxidase</fullName>
        <shortName evidence="1">PNPOx</shortName>
    </alternativeName>
    <alternativeName>
        <fullName evidence="1">Pyridoxal 5'-phosphate synthase</fullName>
    </alternativeName>
</protein>
<feature type="chain" id="PRO_1000186299" description="Pyridoxine/pyridoxamine 5'-phosphate oxidase">
    <location>
        <begin position="1"/>
        <end position="212"/>
    </location>
</feature>
<feature type="binding site" evidence="1">
    <location>
        <begin position="8"/>
        <end position="11"/>
    </location>
    <ligand>
        <name>substrate</name>
    </ligand>
</feature>
<feature type="binding site" evidence="1">
    <location>
        <begin position="61"/>
        <end position="66"/>
    </location>
    <ligand>
        <name>FMN</name>
        <dbReference type="ChEBI" id="CHEBI:58210"/>
    </ligand>
</feature>
<feature type="binding site" evidence="1">
    <location>
        <position position="66"/>
    </location>
    <ligand>
        <name>substrate</name>
    </ligand>
</feature>
<feature type="binding site" evidence="1">
    <location>
        <begin position="76"/>
        <end position="77"/>
    </location>
    <ligand>
        <name>FMN</name>
        <dbReference type="ChEBI" id="CHEBI:58210"/>
    </ligand>
</feature>
<feature type="binding site" evidence="1">
    <location>
        <position position="82"/>
    </location>
    <ligand>
        <name>FMN</name>
        <dbReference type="ChEBI" id="CHEBI:58210"/>
    </ligand>
</feature>
<feature type="binding site" evidence="1">
    <location>
        <position position="83"/>
    </location>
    <ligand>
        <name>FMN</name>
        <dbReference type="ChEBI" id="CHEBI:58210"/>
    </ligand>
</feature>
<feature type="binding site" evidence="1">
    <location>
        <position position="105"/>
    </location>
    <ligand>
        <name>FMN</name>
        <dbReference type="ChEBI" id="CHEBI:58210"/>
    </ligand>
</feature>
<feature type="binding site" evidence="1">
    <location>
        <position position="123"/>
    </location>
    <ligand>
        <name>substrate</name>
    </ligand>
</feature>
<feature type="binding site" evidence="1">
    <location>
        <position position="127"/>
    </location>
    <ligand>
        <name>substrate</name>
    </ligand>
</feature>
<feature type="binding site" evidence="1">
    <location>
        <position position="131"/>
    </location>
    <ligand>
        <name>substrate</name>
    </ligand>
</feature>
<feature type="binding site" evidence="1">
    <location>
        <begin position="140"/>
        <end position="141"/>
    </location>
    <ligand>
        <name>FMN</name>
        <dbReference type="ChEBI" id="CHEBI:58210"/>
    </ligand>
</feature>
<feature type="binding site" evidence="1">
    <location>
        <position position="184"/>
    </location>
    <ligand>
        <name>FMN</name>
        <dbReference type="ChEBI" id="CHEBI:58210"/>
    </ligand>
</feature>
<feature type="binding site" evidence="1">
    <location>
        <begin position="190"/>
        <end position="192"/>
    </location>
    <ligand>
        <name>substrate</name>
    </ligand>
</feature>
<feature type="binding site" evidence="1">
    <location>
        <position position="194"/>
    </location>
    <ligand>
        <name>FMN</name>
        <dbReference type="ChEBI" id="CHEBI:58210"/>
    </ligand>
</feature>
<evidence type="ECO:0000255" key="1">
    <source>
        <dbReference type="HAMAP-Rule" id="MF_01629"/>
    </source>
</evidence>
<keyword id="KW-0285">Flavoprotein</keyword>
<keyword id="KW-0288">FMN</keyword>
<keyword id="KW-0560">Oxidoreductase</keyword>
<keyword id="KW-0664">Pyridoxine biosynthesis</keyword>
<sequence length="212" mass="24079">MTQLADLRRTYVLGALSESDVAPDPMSQFKRWFDEAVTAKLPEPNAMSLATVDADGQPSARIVLLKGIDDRGFTFFTNYESRKGLDLAANPRAALLFHWVQLERQVRVEGRVEKVSDDESDAYFATRPLGSRVGAWASAQSREVPGRDVLEQREQEYRSKFGENPPRPPYWGGYRLVPTALEFWQGRPSRLHDRIAYRLQPGTGWQIVRLSP</sequence>
<name>PDXH_CUPTR</name>
<proteinExistence type="inferred from homology"/>
<comment type="function">
    <text evidence="1">Catalyzes the oxidation of either pyridoxine 5'-phosphate (PNP) or pyridoxamine 5'-phosphate (PMP) into pyridoxal 5'-phosphate (PLP).</text>
</comment>
<comment type="catalytic activity">
    <reaction evidence="1">
        <text>pyridoxamine 5'-phosphate + O2 + H2O = pyridoxal 5'-phosphate + H2O2 + NH4(+)</text>
        <dbReference type="Rhea" id="RHEA:15817"/>
        <dbReference type="ChEBI" id="CHEBI:15377"/>
        <dbReference type="ChEBI" id="CHEBI:15379"/>
        <dbReference type="ChEBI" id="CHEBI:16240"/>
        <dbReference type="ChEBI" id="CHEBI:28938"/>
        <dbReference type="ChEBI" id="CHEBI:58451"/>
        <dbReference type="ChEBI" id="CHEBI:597326"/>
        <dbReference type="EC" id="1.4.3.5"/>
    </reaction>
</comment>
<comment type="catalytic activity">
    <reaction evidence="1">
        <text>pyridoxine 5'-phosphate + O2 = pyridoxal 5'-phosphate + H2O2</text>
        <dbReference type="Rhea" id="RHEA:15149"/>
        <dbReference type="ChEBI" id="CHEBI:15379"/>
        <dbReference type="ChEBI" id="CHEBI:16240"/>
        <dbReference type="ChEBI" id="CHEBI:58589"/>
        <dbReference type="ChEBI" id="CHEBI:597326"/>
        <dbReference type="EC" id="1.4.3.5"/>
    </reaction>
</comment>
<comment type="cofactor">
    <cofactor evidence="1">
        <name>FMN</name>
        <dbReference type="ChEBI" id="CHEBI:58210"/>
    </cofactor>
    <text evidence="1">Binds 1 FMN per subunit.</text>
</comment>
<comment type="pathway">
    <text evidence="1">Cofactor metabolism; pyridoxal 5'-phosphate salvage; pyridoxal 5'-phosphate from pyridoxamine 5'-phosphate: step 1/1.</text>
</comment>
<comment type="pathway">
    <text evidence="1">Cofactor metabolism; pyridoxal 5'-phosphate salvage; pyridoxal 5'-phosphate from pyridoxine 5'-phosphate: step 1/1.</text>
</comment>
<comment type="subunit">
    <text evidence="1">Homodimer.</text>
</comment>
<comment type="similarity">
    <text evidence="1">Belongs to the pyridoxamine 5'-phosphate oxidase family.</text>
</comment>
<gene>
    <name evidence="1" type="primary">pdxH</name>
    <name type="ordered locus">RALTA_A2292</name>
</gene>